<keyword id="KW-0007">Acetylation</keyword>
<keyword id="KW-0012">Acyltransferase</keyword>
<keyword id="KW-0963">Cytoplasm</keyword>
<keyword id="KW-0539">Nucleus</keyword>
<keyword id="KW-0597">Phosphoprotein</keyword>
<keyword id="KW-1185">Reference proteome</keyword>
<keyword id="KW-0808">Transferase</keyword>
<proteinExistence type="evidence at transcript level"/>
<sequence length="169" mass="19398">MKGSRIELGDVTPHNIKQLKRLNQVIFPVSYNDKFYKDVLEVGELAKLAYFNDIAVGAVCCRVDHSQNQKRLYIMTLGCLAPYRRLGIGTKMLNHVLNICEKDGTFDNIYLHVQISNESAIDFYRKFGFEIIETKKNYYKRIEPADAHVLQKNLKVPSGQNADVQKTDN</sequence>
<evidence type="ECO:0000250" key="1">
    <source>
        <dbReference type="UniProtKB" id="Q6PGB6"/>
    </source>
</evidence>
<evidence type="ECO:0000250" key="2">
    <source>
        <dbReference type="UniProtKB" id="Q9GZZ1"/>
    </source>
</evidence>
<evidence type="ECO:0000255" key="3">
    <source>
        <dbReference type="PROSITE-ProRule" id="PRU00532"/>
    </source>
</evidence>
<evidence type="ECO:0000305" key="4"/>
<reference key="1">
    <citation type="submission" date="2004-11" db="EMBL/GenBank/DDBJ databases">
        <authorList>
            <consortium name="The German cDNA consortium"/>
        </authorList>
    </citation>
    <scope>NUCLEOTIDE SEQUENCE [LARGE SCALE MRNA]</scope>
    <source>
        <tissue>Kidney</tissue>
    </source>
</reference>
<accession>Q5RF28</accession>
<comment type="function">
    <text evidence="2">N-alpha-acetyltransferase that acetylates the N-terminus of proteins that retain their initiating methionine (By similarity). Has a broad substrate specificity: able to acetylate the initiator methionine of most peptides, except for those with a proline in second position (By similarity). Also displays N-epsilon-acetyltransferase activity by mediating acetylation of the side chain of specific lysines on proteins (By similarity). Autoacetylates in vivo (By similarity). The relevance of N-epsilon-acetyltransferase activity is however unclear: able to acetylate H4 in vitro, but this result has not been confirmed in vivo (By similarity). Component of N-alpha-acetyltransferase complexes containing NAA10 and NAA15, which has N-alpha-acetyltransferase activity (By similarity). Does not influence the acetyltransferase activity of NAA10 (By similarity). However, it negatively regulates the N-alpha-acetyltransferase activity of the N-terminal acetyltransferase A complex (also called the NatA complex) (By similarity). The multiprotein complexes probably constitute the major contributor for N-terminal acetylation at the ribosome exit tunnel, with NAA10 acetylating all amino termini that are devoid of methionine and NAA50 acetylating other peptides (By similarity). Required for sister chromatid cohesion during mitosis by promoting binding of CDCA5/sororin to cohesin: may act by counteracting the function of NAA10 (By similarity).</text>
</comment>
<comment type="catalytic activity">
    <reaction evidence="2">
        <text>N-terminal L-methionyl-L-alanyl-[protein] + acetyl-CoA = N-terminal N(alpha)-acetyl-L-methionyl-L-alanyl-[protein] + CoA + H(+)</text>
        <dbReference type="Rhea" id="RHEA:50564"/>
        <dbReference type="Rhea" id="RHEA-COMP:12726"/>
        <dbReference type="Rhea" id="RHEA-COMP:12727"/>
        <dbReference type="ChEBI" id="CHEBI:15378"/>
        <dbReference type="ChEBI" id="CHEBI:57287"/>
        <dbReference type="ChEBI" id="CHEBI:57288"/>
        <dbReference type="ChEBI" id="CHEBI:133398"/>
        <dbReference type="ChEBI" id="CHEBI:133399"/>
        <dbReference type="EC" id="2.3.1.258"/>
    </reaction>
</comment>
<comment type="catalytic activity">
    <reaction evidence="2">
        <text>N-terminal L-methionyl-L-seryl-[protein] + acetyl-CoA = N-terminal N(alpha)-acetyl-L-methionyl-L-seryl-[protein] + CoA + H(+)</text>
        <dbReference type="Rhea" id="RHEA:50568"/>
        <dbReference type="Rhea" id="RHEA-COMP:12728"/>
        <dbReference type="Rhea" id="RHEA-COMP:12729"/>
        <dbReference type="ChEBI" id="CHEBI:15378"/>
        <dbReference type="ChEBI" id="CHEBI:57287"/>
        <dbReference type="ChEBI" id="CHEBI:57288"/>
        <dbReference type="ChEBI" id="CHEBI:133400"/>
        <dbReference type="ChEBI" id="CHEBI:133401"/>
        <dbReference type="EC" id="2.3.1.258"/>
    </reaction>
</comment>
<comment type="catalytic activity">
    <reaction evidence="2">
        <text>N-terminal L-methionyl-L-valyl-[protein] + acetyl-CoA = N-terminal N(alpha)-acetyl-L-methionyl-L-valyl-[protein] + CoA + H(+)</text>
        <dbReference type="Rhea" id="RHEA:50572"/>
        <dbReference type="Rhea" id="RHEA-COMP:12730"/>
        <dbReference type="Rhea" id="RHEA-COMP:12731"/>
        <dbReference type="ChEBI" id="CHEBI:15378"/>
        <dbReference type="ChEBI" id="CHEBI:57287"/>
        <dbReference type="ChEBI" id="CHEBI:57288"/>
        <dbReference type="ChEBI" id="CHEBI:133402"/>
        <dbReference type="ChEBI" id="CHEBI:133403"/>
        <dbReference type="EC" id="2.3.1.258"/>
    </reaction>
</comment>
<comment type="catalytic activity">
    <reaction evidence="2">
        <text>N-terminal L-methionyl-L-threonyl-[protein] + acetyl-CoA = N-terminal N(alpha)-acetyl-L-methionyl-L-threonyl-[protein] + CoA + H(+)</text>
        <dbReference type="Rhea" id="RHEA:50576"/>
        <dbReference type="Rhea" id="RHEA-COMP:12732"/>
        <dbReference type="Rhea" id="RHEA-COMP:12733"/>
        <dbReference type="ChEBI" id="CHEBI:15378"/>
        <dbReference type="ChEBI" id="CHEBI:57287"/>
        <dbReference type="ChEBI" id="CHEBI:57288"/>
        <dbReference type="ChEBI" id="CHEBI:133404"/>
        <dbReference type="ChEBI" id="CHEBI:133405"/>
        <dbReference type="EC" id="2.3.1.258"/>
    </reaction>
</comment>
<comment type="catalytic activity">
    <reaction evidence="2">
        <text>N-terminal L-methionyl-L-lysyl-[protein] + acetyl-CoA = N-terminal N(alpha)-acetyl-L-methionyl-L-lysyl-[protein] + CoA + H(+)</text>
        <dbReference type="Rhea" id="RHEA:50580"/>
        <dbReference type="Rhea" id="RHEA-COMP:12734"/>
        <dbReference type="Rhea" id="RHEA-COMP:12735"/>
        <dbReference type="ChEBI" id="CHEBI:15378"/>
        <dbReference type="ChEBI" id="CHEBI:57287"/>
        <dbReference type="ChEBI" id="CHEBI:57288"/>
        <dbReference type="ChEBI" id="CHEBI:133406"/>
        <dbReference type="ChEBI" id="CHEBI:133407"/>
        <dbReference type="EC" id="2.3.1.258"/>
    </reaction>
</comment>
<comment type="catalytic activity">
    <reaction evidence="2">
        <text>N-terminal L-methionyl-L-leucyl-[protein] + acetyl-CoA = N-terminal N(alpha)-acetyl-L-methionyl-L-leucyl-[protein] + CoA + H(+)</text>
        <dbReference type="Rhea" id="RHEA:50520"/>
        <dbReference type="Rhea" id="RHEA-COMP:12711"/>
        <dbReference type="Rhea" id="RHEA-COMP:12712"/>
        <dbReference type="ChEBI" id="CHEBI:15378"/>
        <dbReference type="ChEBI" id="CHEBI:57287"/>
        <dbReference type="ChEBI" id="CHEBI:57288"/>
        <dbReference type="ChEBI" id="CHEBI:133377"/>
        <dbReference type="ChEBI" id="CHEBI:133378"/>
        <dbReference type="EC" id="2.3.1.258"/>
    </reaction>
</comment>
<comment type="catalytic activity">
    <reaction evidence="2">
        <text>N-terminal L-methionyl-L-phenylalanyl-[protein] + acetyl-CoA = N-terminal N(alpha)-acetyl-L-methionyl-L-phenylalanyl-[protein] + CoA + H(+)</text>
        <dbReference type="Rhea" id="RHEA:50528"/>
        <dbReference type="Rhea" id="RHEA-COMP:12715"/>
        <dbReference type="Rhea" id="RHEA-COMP:12716"/>
        <dbReference type="ChEBI" id="CHEBI:15378"/>
        <dbReference type="ChEBI" id="CHEBI:57287"/>
        <dbReference type="ChEBI" id="CHEBI:57288"/>
        <dbReference type="ChEBI" id="CHEBI:133382"/>
        <dbReference type="ChEBI" id="CHEBI:133383"/>
        <dbReference type="EC" id="2.3.1.258"/>
    </reaction>
</comment>
<comment type="catalytic activity">
    <reaction evidence="2">
        <text>N-terminal L-methionyl-L-tyrosyl-[protein] + acetyl-CoA = N-terminal N(alpha)-acetyl-L-methionyl-L-tyrosyl-[protein] + CoA + H(+)</text>
        <dbReference type="Rhea" id="RHEA:50532"/>
        <dbReference type="Rhea" id="RHEA-COMP:12717"/>
        <dbReference type="Rhea" id="RHEA-COMP:12718"/>
        <dbReference type="ChEBI" id="CHEBI:15378"/>
        <dbReference type="ChEBI" id="CHEBI:57287"/>
        <dbReference type="ChEBI" id="CHEBI:57288"/>
        <dbReference type="ChEBI" id="CHEBI:133384"/>
        <dbReference type="ChEBI" id="CHEBI:133385"/>
        <dbReference type="EC" id="2.3.1.258"/>
    </reaction>
</comment>
<comment type="subunit">
    <text evidence="1 2">Component of the N-terminal acetyltransferase E (NatE) complex at least composed of NAA10, NAA15 and NAA50 (By similarity). Interacts with NAA10 (By similarity). Interacts with NAA15 (By similarity). Predominantly interacts with NAA15 in the N-terminal acetyltransferase A complex (NatA complex); the interactions reduce the acetylation activity of the NatA complex (By similarity). Component of the N-terminal acetyltransferase E (NatE)/HYPK complex at least composed of NAA10, NAA15, NAA50 and HYPK (By similarity). Within the complex interacts with NAA15 (By similarity). Its capacity to interact with the NatA complex is reduced by HYPK (By similarity). Interacts with NAA35 (By similarity).</text>
</comment>
<comment type="subcellular location">
    <subcellularLocation>
        <location evidence="2">Cytoplasm</location>
    </subcellularLocation>
    <subcellularLocation>
        <location evidence="2">Nucleus</location>
    </subcellularLocation>
    <text evidence="2">Localizes to the cytoplasm in interphase cells.</text>
</comment>
<comment type="similarity">
    <text evidence="4">Belongs to the acetyltransferase family. GNAT subfamily.</text>
</comment>
<protein>
    <recommendedName>
        <fullName>N-alpha-acetyltransferase 50</fullName>
        <ecNumber evidence="2">2.3.1.258</ecNumber>
    </recommendedName>
    <alternativeName>
        <fullName>N-acetyltransferase NAT13</fullName>
    </alternativeName>
    <alternativeName>
        <fullName evidence="2">N-epsilon-acetyltransferase 50</fullName>
        <ecNumber evidence="2">2.3.1.-</ecNumber>
    </alternativeName>
    <alternativeName>
        <fullName>NatE catalytic subunit</fullName>
    </alternativeName>
</protein>
<name>NAA50_PONAB</name>
<dbReference type="EC" id="2.3.1.258" evidence="2"/>
<dbReference type="EC" id="2.3.1.-" evidence="2"/>
<dbReference type="EMBL" id="CR857333">
    <property type="protein sequence ID" value="CAH89629.1"/>
    <property type="molecule type" value="mRNA"/>
</dbReference>
<dbReference type="RefSeq" id="NP_001124730.1">
    <property type="nucleotide sequence ID" value="NM_001131258.1"/>
</dbReference>
<dbReference type="BMRB" id="Q5RF28"/>
<dbReference type="SMR" id="Q5RF28"/>
<dbReference type="FunCoup" id="Q5RF28">
    <property type="interactions" value="3375"/>
</dbReference>
<dbReference type="STRING" id="9601.ENSPPYP00000015136"/>
<dbReference type="Ensembl" id="ENSPPYT00000015741.2">
    <property type="protein sequence ID" value="ENSPPYP00000015136.1"/>
    <property type="gene ID" value="ENSPPYG00000013536.2"/>
</dbReference>
<dbReference type="GeneID" id="100171579"/>
<dbReference type="KEGG" id="pon:100171579"/>
<dbReference type="CTD" id="80218"/>
<dbReference type="eggNOG" id="KOG3138">
    <property type="taxonomic scope" value="Eukaryota"/>
</dbReference>
<dbReference type="GeneTree" id="ENSGT00390000009110"/>
<dbReference type="HOGENOM" id="CLU_013985_5_3_1"/>
<dbReference type="InParanoid" id="Q5RF28"/>
<dbReference type="OrthoDB" id="47374at2759"/>
<dbReference type="TreeFam" id="TF314841"/>
<dbReference type="Proteomes" id="UP000001595">
    <property type="component" value="Chromosome 3"/>
</dbReference>
<dbReference type="GO" id="GO:0005737">
    <property type="term" value="C:cytoplasm"/>
    <property type="evidence" value="ECO:0000250"/>
    <property type="project" value="UniProtKB"/>
</dbReference>
<dbReference type="GO" id="GO:0005829">
    <property type="term" value="C:cytosol"/>
    <property type="evidence" value="ECO:0000250"/>
    <property type="project" value="UniProtKB"/>
</dbReference>
<dbReference type="GO" id="GO:0031415">
    <property type="term" value="C:NatA complex"/>
    <property type="evidence" value="ECO:0007669"/>
    <property type="project" value="TreeGrafter"/>
</dbReference>
<dbReference type="GO" id="GO:0005634">
    <property type="term" value="C:nucleus"/>
    <property type="evidence" value="ECO:0000250"/>
    <property type="project" value="UniProtKB"/>
</dbReference>
<dbReference type="GO" id="GO:0010485">
    <property type="term" value="F:histone H4 acetyltransferase activity"/>
    <property type="evidence" value="ECO:0000250"/>
    <property type="project" value="UniProtKB"/>
</dbReference>
<dbReference type="GO" id="GO:0120518">
    <property type="term" value="F:protein N-terminal-methionine acetyltransferase activity"/>
    <property type="evidence" value="ECO:0007669"/>
    <property type="project" value="UniProtKB-EC"/>
</dbReference>
<dbReference type="GO" id="GO:0061733">
    <property type="term" value="F:protein-lysine-acetyltransferase activity"/>
    <property type="evidence" value="ECO:0000250"/>
    <property type="project" value="UniProtKB"/>
</dbReference>
<dbReference type="GO" id="GO:0004596">
    <property type="term" value="F:protein-N-terminal amino-acid acetyltransferase activity"/>
    <property type="evidence" value="ECO:0000250"/>
    <property type="project" value="UniProtKB"/>
</dbReference>
<dbReference type="GO" id="GO:0034087">
    <property type="term" value="P:establishment of mitotic sister chromatid cohesion"/>
    <property type="evidence" value="ECO:0000250"/>
    <property type="project" value="UniProtKB"/>
</dbReference>
<dbReference type="GO" id="GO:0071962">
    <property type="term" value="P:mitotic sister chromatid cohesion, centromeric"/>
    <property type="evidence" value="ECO:0000250"/>
    <property type="project" value="UniProtKB"/>
</dbReference>
<dbReference type="GO" id="GO:0006474">
    <property type="term" value="P:N-terminal protein amino acid acetylation"/>
    <property type="evidence" value="ECO:0000250"/>
    <property type="project" value="UniProtKB"/>
</dbReference>
<dbReference type="CDD" id="cd04301">
    <property type="entry name" value="NAT_SF"/>
    <property type="match status" value="1"/>
</dbReference>
<dbReference type="FunFam" id="3.40.630.30:FF:000078">
    <property type="entry name" value="N-alpha-acetyltransferase 50"/>
    <property type="match status" value="1"/>
</dbReference>
<dbReference type="Gene3D" id="3.40.630.30">
    <property type="match status" value="1"/>
</dbReference>
<dbReference type="InterPro" id="IPR016181">
    <property type="entry name" value="Acyl_CoA_acyltransferase"/>
</dbReference>
<dbReference type="InterPro" id="IPR000182">
    <property type="entry name" value="GNAT_dom"/>
</dbReference>
<dbReference type="InterPro" id="IPR051556">
    <property type="entry name" value="N-term/lysine_N-AcTrnsfr"/>
</dbReference>
<dbReference type="PANTHER" id="PTHR42919">
    <property type="entry name" value="N-ALPHA-ACETYLTRANSFERASE"/>
    <property type="match status" value="1"/>
</dbReference>
<dbReference type="PANTHER" id="PTHR42919:SF41">
    <property type="entry name" value="N-ALPHA-ACETYLTRANSFERASE 50"/>
    <property type="match status" value="1"/>
</dbReference>
<dbReference type="Pfam" id="PF00583">
    <property type="entry name" value="Acetyltransf_1"/>
    <property type="match status" value="1"/>
</dbReference>
<dbReference type="SUPFAM" id="SSF55729">
    <property type="entry name" value="Acyl-CoA N-acyltransferases (Nat)"/>
    <property type="match status" value="1"/>
</dbReference>
<dbReference type="PROSITE" id="PS51186">
    <property type="entry name" value="GNAT"/>
    <property type="match status" value="1"/>
</dbReference>
<feature type="chain" id="PRO_0000284904" description="N-alpha-acetyltransferase 50">
    <location>
        <begin position="1"/>
        <end position="169"/>
    </location>
</feature>
<feature type="domain" description="N-acetyltransferase" evidence="3">
    <location>
        <begin position="6"/>
        <end position="155"/>
    </location>
</feature>
<feature type="region of interest" description="Substrate" evidence="2">
    <location>
        <begin position="138"/>
        <end position="141"/>
    </location>
</feature>
<feature type="active site" evidence="2">
    <location>
        <position position="73"/>
    </location>
</feature>
<feature type="active site" evidence="2">
    <location>
        <position position="112"/>
    </location>
</feature>
<feature type="binding site" evidence="2">
    <location>
        <position position="31"/>
    </location>
    <ligand>
        <name>substrate</name>
    </ligand>
</feature>
<feature type="binding site" evidence="2">
    <location>
        <position position="75"/>
    </location>
    <ligand>
        <name>substrate</name>
    </ligand>
</feature>
<feature type="binding site" evidence="2">
    <location>
        <begin position="77"/>
        <end position="90"/>
    </location>
    <ligand>
        <name>acetyl-CoA</name>
        <dbReference type="ChEBI" id="CHEBI:57288"/>
    </ligand>
</feature>
<feature type="binding site" evidence="2">
    <location>
        <begin position="117"/>
        <end position="126"/>
    </location>
    <ligand>
        <name>CoA</name>
        <dbReference type="ChEBI" id="CHEBI:57287"/>
    </ligand>
</feature>
<feature type="modified residue" description="Phosphothreonine" evidence="2">
    <location>
        <position position="12"/>
    </location>
</feature>
<feature type="modified residue" description="N6-acetyllysine" evidence="2">
    <location>
        <position position="34"/>
    </location>
</feature>
<feature type="modified residue" description="N6-acetyllysine" evidence="2">
    <location>
        <position position="37"/>
    </location>
</feature>
<feature type="modified residue" description="Phosphotyrosine" evidence="2">
    <location>
        <position position="110"/>
    </location>
</feature>
<feature type="modified residue" description="N6-acetyllysine" evidence="2">
    <location>
        <position position="140"/>
    </location>
</feature>
<organism>
    <name type="scientific">Pongo abelii</name>
    <name type="common">Sumatran orangutan</name>
    <name type="synonym">Pongo pygmaeus abelii</name>
    <dbReference type="NCBI Taxonomy" id="9601"/>
    <lineage>
        <taxon>Eukaryota</taxon>
        <taxon>Metazoa</taxon>
        <taxon>Chordata</taxon>
        <taxon>Craniata</taxon>
        <taxon>Vertebrata</taxon>
        <taxon>Euteleostomi</taxon>
        <taxon>Mammalia</taxon>
        <taxon>Eutheria</taxon>
        <taxon>Euarchontoglires</taxon>
        <taxon>Primates</taxon>
        <taxon>Haplorrhini</taxon>
        <taxon>Catarrhini</taxon>
        <taxon>Hominidae</taxon>
        <taxon>Pongo</taxon>
    </lineage>
</organism>
<gene>
    <name type="primary">NAA50</name>
    <name type="synonym">NAT13</name>
</gene>